<name>GSM1_CANDC</name>
<feature type="chain" id="PRO_0000406481" description="Glucose starvation modulator protein 1">
    <location>
        <begin position="1"/>
        <end position="565"/>
    </location>
</feature>
<feature type="DNA-binding region" description="Zn(2)-C6 fungal-type" evidence="2">
    <location>
        <begin position="20"/>
        <end position="48"/>
    </location>
</feature>
<feature type="region of interest" description="Disordered" evidence="3">
    <location>
        <begin position="63"/>
        <end position="106"/>
    </location>
</feature>
<feature type="region of interest" description="Disordered" evidence="3">
    <location>
        <begin position="250"/>
        <end position="269"/>
    </location>
</feature>
<feature type="compositionally biased region" description="Polar residues" evidence="3">
    <location>
        <begin position="82"/>
        <end position="93"/>
    </location>
</feature>
<feature type="compositionally biased region" description="Low complexity" evidence="3">
    <location>
        <begin position="252"/>
        <end position="269"/>
    </location>
</feature>
<gene>
    <name type="primary">GSM1</name>
    <name type="ORF">CD36_06700</name>
</gene>
<organism>
    <name type="scientific">Candida dubliniensis (strain CD36 / ATCC MYA-646 / CBS 7987 / NCPF 3949 / NRRL Y-17841)</name>
    <name type="common">Yeast</name>
    <dbReference type="NCBI Taxonomy" id="573826"/>
    <lineage>
        <taxon>Eukaryota</taxon>
        <taxon>Fungi</taxon>
        <taxon>Dikarya</taxon>
        <taxon>Ascomycota</taxon>
        <taxon>Saccharomycotina</taxon>
        <taxon>Pichiomycetes</taxon>
        <taxon>Debaryomycetaceae</taxon>
        <taxon>Candida/Lodderomyces clade</taxon>
        <taxon>Candida</taxon>
    </lineage>
</organism>
<protein>
    <recommendedName>
        <fullName>Glucose starvation modulator protein 1</fullName>
    </recommendedName>
</protein>
<reference key="1">
    <citation type="journal article" date="2009" name="Genome Res.">
        <title>Comparative genomics of the fungal pathogens Candida dubliniensis and Candida albicans.</title>
        <authorList>
            <person name="Jackson A.P."/>
            <person name="Gamble J.A."/>
            <person name="Yeomans T."/>
            <person name="Moran G.P."/>
            <person name="Saunders D."/>
            <person name="Harris D."/>
            <person name="Aslett M."/>
            <person name="Barrell J.F."/>
            <person name="Butler G."/>
            <person name="Citiulo F."/>
            <person name="Coleman D.C."/>
            <person name="de Groot P.W.J."/>
            <person name="Goodwin T.J."/>
            <person name="Quail M.A."/>
            <person name="McQuillan J."/>
            <person name="Munro C.A."/>
            <person name="Pain A."/>
            <person name="Poulter R.T."/>
            <person name="Rajandream M.A."/>
            <person name="Renauld H."/>
            <person name="Spiering M.J."/>
            <person name="Tivey A."/>
            <person name="Gow N.A.R."/>
            <person name="Barrell B."/>
            <person name="Sullivan D.J."/>
            <person name="Berriman M."/>
        </authorList>
    </citation>
    <scope>NUCLEOTIDE SEQUENCE [LARGE SCALE GENOMIC DNA]</scope>
    <source>
        <strain>CD36 / ATCC MYA-646 / CBS 7987 / NCPF 3949 / NRRL Y-17841</strain>
    </source>
</reference>
<keyword id="KW-0238">DNA-binding</keyword>
<keyword id="KW-0479">Metal-binding</keyword>
<keyword id="KW-0539">Nucleus</keyword>
<keyword id="KW-0804">Transcription</keyword>
<keyword id="KW-0805">Transcription regulation</keyword>
<keyword id="KW-0862">Zinc</keyword>
<dbReference type="EMBL" id="FM992688">
    <property type="protein sequence ID" value="CAX44964.1"/>
    <property type="molecule type" value="Genomic_DNA"/>
</dbReference>
<dbReference type="RefSeq" id="XP_002417329.1">
    <property type="nucleotide sequence ID" value="XM_002417284.1"/>
</dbReference>
<dbReference type="GeneID" id="8044869"/>
<dbReference type="KEGG" id="cdu:CD36_06700"/>
<dbReference type="CGD" id="CAL0000163245">
    <property type="gene designation" value="Cd36_06700"/>
</dbReference>
<dbReference type="VEuPathDB" id="FungiDB:CD36_06700"/>
<dbReference type="eggNOG" id="ENOG502R2ZP">
    <property type="taxonomic scope" value="Eukaryota"/>
</dbReference>
<dbReference type="HOGENOM" id="CLU_010748_2_2_1"/>
<dbReference type="OrthoDB" id="2538135at2759"/>
<dbReference type="Proteomes" id="UP000002605">
    <property type="component" value="Chromosome 1"/>
</dbReference>
<dbReference type="GO" id="GO:0005634">
    <property type="term" value="C:nucleus"/>
    <property type="evidence" value="ECO:0007669"/>
    <property type="project" value="UniProtKB-SubCell"/>
</dbReference>
<dbReference type="GO" id="GO:0000981">
    <property type="term" value="F:DNA-binding transcription factor activity, RNA polymerase II-specific"/>
    <property type="evidence" value="ECO:0007669"/>
    <property type="project" value="InterPro"/>
</dbReference>
<dbReference type="GO" id="GO:0000977">
    <property type="term" value="F:RNA polymerase II transcription regulatory region sequence-specific DNA binding"/>
    <property type="evidence" value="ECO:0007669"/>
    <property type="project" value="TreeGrafter"/>
</dbReference>
<dbReference type="GO" id="GO:0008270">
    <property type="term" value="F:zinc ion binding"/>
    <property type="evidence" value="ECO:0007669"/>
    <property type="project" value="InterPro"/>
</dbReference>
<dbReference type="GO" id="GO:0009267">
    <property type="term" value="P:cellular response to starvation"/>
    <property type="evidence" value="ECO:0007669"/>
    <property type="project" value="TreeGrafter"/>
</dbReference>
<dbReference type="CDD" id="cd00067">
    <property type="entry name" value="GAL4"/>
    <property type="match status" value="1"/>
</dbReference>
<dbReference type="Gene3D" id="4.10.240.10">
    <property type="entry name" value="Zn(2)-C6 fungal-type DNA-binding domain"/>
    <property type="match status" value="1"/>
</dbReference>
<dbReference type="InterPro" id="IPR050335">
    <property type="entry name" value="ERT1_acuK_gluconeogen_tf"/>
</dbReference>
<dbReference type="InterPro" id="IPR056751">
    <property type="entry name" value="PAS_13"/>
</dbReference>
<dbReference type="InterPro" id="IPR036864">
    <property type="entry name" value="Zn2-C6_fun-type_DNA-bd_sf"/>
</dbReference>
<dbReference type="InterPro" id="IPR001138">
    <property type="entry name" value="Zn2Cys6_DnaBD"/>
</dbReference>
<dbReference type="PANTHER" id="PTHR47659:SF8">
    <property type="entry name" value="GLUCOSE STARVATION MODULATOR PROTEIN 1"/>
    <property type="match status" value="1"/>
</dbReference>
<dbReference type="PANTHER" id="PTHR47659">
    <property type="entry name" value="ZN(II)2CYS6 TRANSCRIPTION FACTOR (EUROFUNG)-RELATED"/>
    <property type="match status" value="1"/>
</dbReference>
<dbReference type="Pfam" id="PF24990">
    <property type="entry name" value="PAS_13"/>
    <property type="match status" value="1"/>
</dbReference>
<dbReference type="Pfam" id="PF00172">
    <property type="entry name" value="Zn_clus"/>
    <property type="match status" value="1"/>
</dbReference>
<dbReference type="SMART" id="SM00066">
    <property type="entry name" value="GAL4"/>
    <property type="match status" value="1"/>
</dbReference>
<dbReference type="SUPFAM" id="SSF57701">
    <property type="entry name" value="Zn2/Cys6 DNA-binding domain"/>
    <property type="match status" value="1"/>
</dbReference>
<dbReference type="PROSITE" id="PS00463">
    <property type="entry name" value="ZN2_CY6_FUNGAL_1"/>
    <property type="match status" value="1"/>
</dbReference>
<dbReference type="PROSITE" id="PS50048">
    <property type="entry name" value="ZN2_CY6_FUNGAL_2"/>
    <property type="match status" value="1"/>
</dbReference>
<accession>B9W8A8</accession>
<comment type="function">
    <text evidence="1">Transcription factor which regulates nonfermentable carbon utilization.</text>
</comment>
<comment type="subcellular location">
    <subcellularLocation>
        <location evidence="2">Nucleus</location>
    </subcellularLocation>
</comment>
<comment type="similarity">
    <text evidence="4">Belongs to the ERT1/acuK family.</text>
</comment>
<evidence type="ECO:0000250" key="1"/>
<evidence type="ECO:0000255" key="2">
    <source>
        <dbReference type="PROSITE-ProRule" id="PRU00227"/>
    </source>
</evidence>
<evidence type="ECO:0000256" key="3">
    <source>
        <dbReference type="SAM" id="MobiDB-lite"/>
    </source>
</evidence>
<evidence type="ECO:0000305" key="4"/>
<sequence>MTKKLTPQEKKNRKPAVRACVFCHQKHLQCSNERPCKNCVKRNIAHGCKDIVRKRVKYLTGEGVSGTVSSKQSTPRKKLKTSPLSTSMSPTDSMKSDLATPVESSNHFPASISSSVDVMTATQPSAMNTPSDAQPINDILEVPPLFDNSHMINSDVPGTNITLTTQNLITPDPLSFHTNTVSNTTTDVLNKLLNDNYETESLLSVNNNGDHLLEMAHTSSGHLSNGQQFQSNYLNEEYMMLGDIILQSKQVSPSPSNTSTSENNTNTLSPSSFGYMSNINFEDFNQPKKKVVQKLKDSRPFISLGFTEELAPHDSSNNADYYGHRMTNDIVGKTDEGPGNPIINYNTKFTTDYVPPSITNNLYKTASDLYSKELKNFYYPLSYHALTKLLKVIFGGNNLSPEEKQEKRSKLLIILKLIASYRPTFIAAHRDLIQEDLLMLEMTLQRSLLDYKKLAELNSSPTIMWRRTGEIISITEDMALLLEHSSFDLLKERRFIFELMDDNSIVDYFNLFANIAVGNLKSVIQTAIQMKTKSSNLIKFTCVFTIKRDIFDIPMIVIGQFLPIV</sequence>
<proteinExistence type="inferred from homology"/>